<dbReference type="EMBL" id="CP000950">
    <property type="protein sequence ID" value="ACA69971.1"/>
    <property type="molecule type" value="Genomic_DNA"/>
</dbReference>
<dbReference type="RefSeq" id="WP_012304648.1">
    <property type="nucleotide sequence ID" value="NZ_CP009792.1"/>
</dbReference>
<dbReference type="SMR" id="B1JLV4"/>
<dbReference type="KEGG" id="ypy:YPK_3704"/>
<dbReference type="PATRIC" id="fig|502800.11.peg.50"/>
<dbReference type="Gene3D" id="2.30.110.10">
    <property type="entry name" value="Electron Transport, Fmn-binding Protein, Chain A"/>
    <property type="match status" value="1"/>
</dbReference>
<dbReference type="HAMAP" id="MF_00764">
    <property type="entry name" value="UPF0306"/>
    <property type="match status" value="1"/>
</dbReference>
<dbReference type="InterPro" id="IPR012349">
    <property type="entry name" value="Split_barrel_FMN-bd"/>
</dbReference>
<dbReference type="InterPro" id="IPR011194">
    <property type="entry name" value="UPF0306"/>
</dbReference>
<dbReference type="NCBIfam" id="NF002900">
    <property type="entry name" value="PRK03467.1"/>
    <property type="match status" value="1"/>
</dbReference>
<dbReference type="PIRSF" id="PIRSF009554">
    <property type="entry name" value="UCP009554"/>
    <property type="match status" value="1"/>
</dbReference>
<dbReference type="SUPFAM" id="SSF50475">
    <property type="entry name" value="FMN-binding split barrel"/>
    <property type="match status" value="1"/>
</dbReference>
<gene>
    <name type="ordered locus">YPK_3704</name>
</gene>
<reference key="1">
    <citation type="submission" date="2008-02" db="EMBL/GenBank/DDBJ databases">
        <title>Complete sequence of Yersinia pseudotuberculosis YPIII.</title>
        <authorList>
            <consortium name="US DOE Joint Genome Institute"/>
            <person name="Copeland A."/>
            <person name="Lucas S."/>
            <person name="Lapidus A."/>
            <person name="Glavina del Rio T."/>
            <person name="Dalin E."/>
            <person name="Tice H."/>
            <person name="Bruce D."/>
            <person name="Goodwin L."/>
            <person name="Pitluck S."/>
            <person name="Munk A.C."/>
            <person name="Brettin T."/>
            <person name="Detter J.C."/>
            <person name="Han C."/>
            <person name="Tapia R."/>
            <person name="Schmutz J."/>
            <person name="Larimer F."/>
            <person name="Land M."/>
            <person name="Hauser L."/>
            <person name="Challacombe J.F."/>
            <person name="Green L."/>
            <person name="Lindler L.E."/>
            <person name="Nikolich M.P."/>
            <person name="Richardson P."/>
        </authorList>
    </citation>
    <scope>NUCLEOTIDE SEQUENCE [LARGE SCALE GENOMIC DNA]</scope>
    <source>
        <strain>YPIII</strain>
    </source>
</reference>
<name>Y3704_YERPY</name>
<accession>B1JLV4</accession>
<proteinExistence type="inferred from homology"/>
<organism>
    <name type="scientific">Yersinia pseudotuberculosis serotype O:3 (strain YPIII)</name>
    <dbReference type="NCBI Taxonomy" id="502800"/>
    <lineage>
        <taxon>Bacteria</taxon>
        <taxon>Pseudomonadati</taxon>
        <taxon>Pseudomonadota</taxon>
        <taxon>Gammaproteobacteria</taxon>
        <taxon>Enterobacterales</taxon>
        <taxon>Yersiniaceae</taxon>
        <taxon>Yersinia</taxon>
    </lineage>
</organism>
<comment type="similarity">
    <text evidence="1">Belongs to the UPF0306 family.</text>
</comment>
<sequence length="147" mass="16671">MNNPDDVLLINRFLRQQHVLTLCAGSGMDMWCASCFYVFDENQMALFLMTEKHTRHSELMLINPQVAGTVATQSRTIALIKGIQYRGDISLLSGDAEQAARSRYCRRFPVAKVSSAPLWQLNLLEIKMTNNALGFGKKLHWSRVEPL</sequence>
<evidence type="ECO:0000255" key="1">
    <source>
        <dbReference type="HAMAP-Rule" id="MF_00764"/>
    </source>
</evidence>
<protein>
    <recommendedName>
        <fullName evidence="1">UPF0306 protein YPK_3704</fullName>
    </recommendedName>
</protein>
<feature type="chain" id="PRO_1000198372" description="UPF0306 protein YPK_3704">
    <location>
        <begin position="1"/>
        <end position="147"/>
    </location>
</feature>